<protein>
    <recommendedName>
        <fullName>Mating-type-like protein ALPHA2</fullName>
    </recommendedName>
    <alternativeName>
        <fullName>MTL1alpha2 protein</fullName>
    </alternativeName>
</protein>
<organism>
    <name type="scientific">Candida glabrata (strain ATCC 2001 / BCRC 20586 / JCM 3761 / NBRC 0622 / NRRL Y-65 / CBS 138)</name>
    <name type="common">Yeast</name>
    <name type="synonym">Nakaseomyces glabratus</name>
    <dbReference type="NCBI Taxonomy" id="284593"/>
    <lineage>
        <taxon>Eukaryota</taxon>
        <taxon>Fungi</taxon>
        <taxon>Dikarya</taxon>
        <taxon>Ascomycota</taxon>
        <taxon>Saccharomycotina</taxon>
        <taxon>Saccharomycetes</taxon>
        <taxon>Saccharomycetales</taxon>
        <taxon>Saccharomycetaceae</taxon>
        <taxon>Nakaseomyces</taxon>
    </lineage>
</organism>
<sequence length="186" mass="21816">MSKKSRISITHLLNPIQEENLKEKLQEINNQLISLCSSLPKRQSLPGPSSDILRFLSRNNLDPQEIGLIKTTYRLSTLLSKLREHEIVFNVVTKDHLLKKGVPNHYAASYRGHRFTRENVQILETWYRNHIDNPYLDHNSQQYLAQKTNLSKIQIKNWVANRRRKQKSIYISPFRPTLMAQNSLDT</sequence>
<dbReference type="EMBL" id="AY181247">
    <property type="protein sequence ID" value="AAO25592.1"/>
    <property type="molecule type" value="Genomic_DNA"/>
</dbReference>
<dbReference type="EMBL" id="AY191463">
    <property type="protein sequence ID" value="AAP06782.1"/>
    <property type="molecule type" value="Genomic_DNA"/>
</dbReference>
<dbReference type="EMBL" id="AY191464">
    <property type="protein sequence ID" value="AAP06784.1"/>
    <property type="molecule type" value="Genomic_DNA"/>
</dbReference>
<dbReference type="EMBL" id="CR380948">
    <property type="protein sequence ID" value="CAG57925.1"/>
    <property type="molecule type" value="Genomic_DNA"/>
</dbReference>
<dbReference type="SMR" id="Q86Z42"/>
<dbReference type="FunCoup" id="Q86Z42">
    <property type="interactions" value="229"/>
</dbReference>
<dbReference type="STRING" id="284593.Q86Z42"/>
<dbReference type="EnsemblFungi" id="CAGL0B01265g-T">
    <property type="protein sequence ID" value="CAGL0B01265g-T-p1"/>
    <property type="gene ID" value="CAGL0B01265g"/>
</dbReference>
<dbReference type="KEGG" id="cgr:2886680"/>
<dbReference type="CGD" id="CAL0127104">
    <property type="gene designation" value="MATalpha2"/>
</dbReference>
<dbReference type="VEuPathDB" id="FungiDB:CAGL0B01265g"/>
<dbReference type="eggNOG" id="KOG0773">
    <property type="taxonomic scope" value="Eukaryota"/>
</dbReference>
<dbReference type="HOGENOM" id="CLU_091806_1_0_1"/>
<dbReference type="InParanoid" id="Q86Z42"/>
<dbReference type="OMA" id="KVQIKNW"/>
<dbReference type="Proteomes" id="UP000002428">
    <property type="component" value="Chromosome B"/>
</dbReference>
<dbReference type="GO" id="GO:0005634">
    <property type="term" value="C:nucleus"/>
    <property type="evidence" value="ECO:0007669"/>
    <property type="project" value="UniProtKB-SubCell"/>
</dbReference>
<dbReference type="GO" id="GO:0003677">
    <property type="term" value="F:DNA binding"/>
    <property type="evidence" value="ECO:0007669"/>
    <property type="project" value="UniProtKB-KW"/>
</dbReference>
<dbReference type="GO" id="GO:0000981">
    <property type="term" value="F:DNA-binding transcription factor activity, RNA polymerase II-specific"/>
    <property type="evidence" value="ECO:0007669"/>
    <property type="project" value="InterPro"/>
</dbReference>
<dbReference type="CDD" id="cd00086">
    <property type="entry name" value="homeodomain"/>
    <property type="match status" value="1"/>
</dbReference>
<dbReference type="Gene3D" id="1.10.10.60">
    <property type="entry name" value="Homeodomain-like"/>
    <property type="match status" value="1"/>
</dbReference>
<dbReference type="InterPro" id="IPR001356">
    <property type="entry name" value="HD"/>
</dbReference>
<dbReference type="InterPro" id="IPR017970">
    <property type="entry name" value="Homeobox_CS"/>
</dbReference>
<dbReference type="InterPro" id="IPR009057">
    <property type="entry name" value="Homeodomain-like_sf"/>
</dbReference>
<dbReference type="InterPro" id="IPR050224">
    <property type="entry name" value="TALE_homeobox"/>
</dbReference>
<dbReference type="PANTHER" id="PTHR11850">
    <property type="entry name" value="HOMEOBOX PROTEIN TRANSCRIPTION FACTORS"/>
    <property type="match status" value="1"/>
</dbReference>
<dbReference type="Pfam" id="PF00046">
    <property type="entry name" value="Homeodomain"/>
    <property type="match status" value="1"/>
</dbReference>
<dbReference type="SMART" id="SM00389">
    <property type="entry name" value="HOX"/>
    <property type="match status" value="1"/>
</dbReference>
<dbReference type="SUPFAM" id="SSF46689">
    <property type="entry name" value="Homeodomain-like"/>
    <property type="match status" value="1"/>
</dbReference>
<dbReference type="PROSITE" id="PS00027">
    <property type="entry name" value="HOMEOBOX_1"/>
    <property type="match status" value="1"/>
</dbReference>
<dbReference type="PROSITE" id="PS50071">
    <property type="entry name" value="HOMEOBOX_2"/>
    <property type="match status" value="1"/>
</dbReference>
<comment type="function">
    <text>Mating type proteins are sequence specific DNA-binding proteins that act as master switches in yeast differentiation by controlling gene expression in a cell type-specific fashion.</text>
</comment>
<comment type="subcellular location">
    <subcellularLocation>
        <location evidence="1">Nucleus</location>
    </subcellularLocation>
</comment>
<comment type="developmental stage">
    <text evidence="3">Only present in alpha-cells (classes II and III).</text>
</comment>
<comment type="miscellaneous">
    <text>There are three genetic loci for mating type genes in C.glabrata. MTL1 seems to be the expression locus that determines the mating type of the cell, whereas MTL2 (containing MTL2A1) and MTL3 (containing MTL3ALPHA1 and MTL3ALPHA2) appear to represent silenced repositories of mating type information. Notably, MTL3ALPHA2 contains a unique stretch coding for 22 amino acids at the C-terminus that is not shared by MTL1ALPHA2.</text>
</comment>
<comment type="miscellaneous">
    <text>Haploid C.glabrata strains can switch mating type, however, neither mating nor diploid forms of C.glabrata have been observed so far.</text>
</comment>
<comment type="similarity">
    <text evidence="4">Belongs to the TALE/M-ATYP homeobox family.</text>
</comment>
<name>MTAL2_CANGA</name>
<feature type="chain" id="PRO_0000049175" description="Mating-type-like protein ALPHA2">
    <location>
        <begin position="1"/>
        <end position="186"/>
    </location>
</feature>
<feature type="DNA-binding region" description="Homeobox; TALE-type" evidence="1">
    <location>
        <begin position="108"/>
        <end position="170"/>
    </location>
</feature>
<feature type="sequence variant" description="In strain: PB921." evidence="2">
    <original>L</original>
    <variation>P</variation>
    <location>
        <position position="150"/>
    </location>
</feature>
<accession>Q86Z42</accession>
<accession>Q6FXB4</accession>
<accession>Q870I6</accession>
<keyword id="KW-0238">DNA-binding</keyword>
<keyword id="KW-0371">Homeobox</keyword>
<keyword id="KW-0539">Nucleus</keyword>
<keyword id="KW-1185">Reference proteome</keyword>
<evidence type="ECO:0000255" key="1">
    <source>
        <dbReference type="PROSITE-ProRule" id="PRU00108"/>
    </source>
</evidence>
<evidence type="ECO:0000269" key="2">
    <source>
    </source>
</evidence>
<evidence type="ECO:0000269" key="3">
    <source>
    </source>
</evidence>
<evidence type="ECO:0000305" key="4"/>
<proteinExistence type="evidence at transcript level"/>
<reference key="1">
    <citation type="journal article" date="2003" name="Genome Biol.">
        <title>Evidence from comparative genomics for a complete sexual cycle in the 'asexual' pathogenic yeast Candida glabrata.</title>
        <authorList>
            <person name="Wong S."/>
            <person name="Fares M.A."/>
            <person name="Zimmermann W."/>
            <person name="Butler G."/>
            <person name="Wolfe K.H."/>
        </authorList>
    </citation>
    <scope>NUCLEOTIDE SEQUENCE [GENOMIC DNA]</scope>
    <source>
        <strain>ATCC 2001 / BCRC 20586 / JCM 3761 / NBRC 0622 / NRRL Y-65 / CBS 138</strain>
    </source>
</reference>
<reference key="2">
    <citation type="journal article" date="2003" name="Eukaryot. Cell">
        <title>Three mating type-like loci in Candida glabrata.</title>
        <authorList>
            <person name="Srikantha T."/>
            <person name="Lachke S.A."/>
            <person name="Soll D.R."/>
        </authorList>
    </citation>
    <scope>NUCLEOTIDE SEQUENCE [GENOMIC DNA]</scope>
    <scope>VARIANT PRO-150</scope>
    <source>
        <strain>1480.47</strain>
        <strain>PB921</strain>
    </source>
</reference>
<reference key="3">
    <citation type="journal article" date="2004" name="Nature">
        <title>Genome evolution in yeasts.</title>
        <authorList>
            <person name="Dujon B."/>
            <person name="Sherman D."/>
            <person name="Fischer G."/>
            <person name="Durrens P."/>
            <person name="Casaregola S."/>
            <person name="Lafontaine I."/>
            <person name="de Montigny J."/>
            <person name="Marck C."/>
            <person name="Neuveglise C."/>
            <person name="Talla E."/>
            <person name="Goffard N."/>
            <person name="Frangeul L."/>
            <person name="Aigle M."/>
            <person name="Anthouard V."/>
            <person name="Babour A."/>
            <person name="Barbe V."/>
            <person name="Barnay S."/>
            <person name="Blanchin S."/>
            <person name="Beckerich J.-M."/>
            <person name="Beyne E."/>
            <person name="Bleykasten C."/>
            <person name="Boisrame A."/>
            <person name="Boyer J."/>
            <person name="Cattolico L."/>
            <person name="Confanioleri F."/>
            <person name="de Daruvar A."/>
            <person name="Despons L."/>
            <person name="Fabre E."/>
            <person name="Fairhead C."/>
            <person name="Ferry-Dumazet H."/>
            <person name="Groppi A."/>
            <person name="Hantraye F."/>
            <person name="Hennequin C."/>
            <person name="Jauniaux N."/>
            <person name="Joyet P."/>
            <person name="Kachouri R."/>
            <person name="Kerrest A."/>
            <person name="Koszul R."/>
            <person name="Lemaire M."/>
            <person name="Lesur I."/>
            <person name="Ma L."/>
            <person name="Muller H."/>
            <person name="Nicaud J.-M."/>
            <person name="Nikolski M."/>
            <person name="Oztas S."/>
            <person name="Ozier-Kalogeropoulos O."/>
            <person name="Pellenz S."/>
            <person name="Potier S."/>
            <person name="Richard G.-F."/>
            <person name="Straub M.-L."/>
            <person name="Suleau A."/>
            <person name="Swennen D."/>
            <person name="Tekaia F."/>
            <person name="Wesolowski-Louvel M."/>
            <person name="Westhof E."/>
            <person name="Wirth B."/>
            <person name="Zeniou-Meyer M."/>
            <person name="Zivanovic Y."/>
            <person name="Bolotin-Fukuhara M."/>
            <person name="Thierry A."/>
            <person name="Bouchier C."/>
            <person name="Caudron B."/>
            <person name="Scarpelli C."/>
            <person name="Gaillardin C."/>
            <person name="Weissenbach J."/>
            <person name="Wincker P."/>
            <person name="Souciet J.-L."/>
        </authorList>
    </citation>
    <scope>NUCLEOTIDE SEQUENCE [LARGE SCALE GENOMIC DNA]</scope>
    <source>
        <strain>ATCC 2001 / BCRC 20586 / JCM 3761 / NBRC 0622 / NRRL Y-65 / CBS 138</strain>
    </source>
</reference>
<reference key="4">
    <citation type="journal article" date="2003" name="Infect. Immun.">
        <title>Phenotypic switching and mating type switching of Candida glabrata at sites of colonization.</title>
        <authorList>
            <person name="Brockert P.J."/>
            <person name="Lachke S.A."/>
            <person name="Srikantha T."/>
            <person name="Pujol C."/>
            <person name="Galask R."/>
            <person name="Soll D.R."/>
        </authorList>
    </citation>
    <scope>DEVELOPMENTAL STAGE</scope>
</reference>
<gene>
    <name type="primary">MTL1ALPHA2</name>
    <name type="synonym">ALPHA2</name>
    <name type="ordered locus">CAGL0B01265g</name>
</gene>